<protein>
    <recommendedName>
        <fullName>Rubber cis-polyprenyltransferase HRT2</fullName>
        <ecNumber>2.5.1.20</ecNumber>
    </recommendedName>
</protein>
<gene>
    <name type="primary">HRT2</name>
</gene>
<organism>
    <name type="scientific">Hevea brasiliensis</name>
    <name type="common">Para rubber tree</name>
    <name type="synonym">Siphonia brasiliensis</name>
    <dbReference type="NCBI Taxonomy" id="3981"/>
    <lineage>
        <taxon>Eukaryota</taxon>
        <taxon>Viridiplantae</taxon>
        <taxon>Streptophyta</taxon>
        <taxon>Embryophyta</taxon>
        <taxon>Tracheophyta</taxon>
        <taxon>Spermatophyta</taxon>
        <taxon>Magnoliopsida</taxon>
        <taxon>eudicotyledons</taxon>
        <taxon>Gunneridae</taxon>
        <taxon>Pentapetalae</taxon>
        <taxon>rosids</taxon>
        <taxon>fabids</taxon>
        <taxon>Malpighiales</taxon>
        <taxon>Euphorbiaceae</taxon>
        <taxon>Crotonoideae</taxon>
        <taxon>Micrandreae</taxon>
        <taxon>Hevea</taxon>
    </lineage>
</organism>
<dbReference type="EC" id="2.5.1.20"/>
<dbReference type="EMBL" id="AB064661">
    <property type="protein sequence ID" value="BAB83522.1"/>
    <property type="molecule type" value="mRNA"/>
</dbReference>
<dbReference type="SMR" id="Q8W3U4"/>
<dbReference type="BioCyc" id="MetaCyc:MONOMER-20090"/>
<dbReference type="BRENDA" id="2.5.1.20">
    <property type="organism ID" value="2665"/>
</dbReference>
<dbReference type="GO" id="GO:0005783">
    <property type="term" value="C:endoplasmic reticulum"/>
    <property type="evidence" value="ECO:0007669"/>
    <property type="project" value="TreeGrafter"/>
</dbReference>
<dbReference type="GO" id="GO:0045547">
    <property type="term" value="F:ditrans,polycis-polyprenyl diphosphate synthase [(2E,6E)-farnesyl diphosphate specific] activity"/>
    <property type="evidence" value="ECO:0007669"/>
    <property type="project" value="TreeGrafter"/>
</dbReference>
<dbReference type="GO" id="GO:0050267">
    <property type="term" value="F:rubber cis-polyprenylcistransferase activity"/>
    <property type="evidence" value="ECO:0007669"/>
    <property type="project" value="UniProtKB-EC"/>
</dbReference>
<dbReference type="GO" id="GO:0016094">
    <property type="term" value="P:polyprenol biosynthetic process"/>
    <property type="evidence" value="ECO:0007669"/>
    <property type="project" value="TreeGrafter"/>
</dbReference>
<dbReference type="CDD" id="cd00475">
    <property type="entry name" value="Cis_IPPS"/>
    <property type="match status" value="1"/>
</dbReference>
<dbReference type="Gene3D" id="3.40.1180.10">
    <property type="entry name" value="Decaprenyl diphosphate synthase-like"/>
    <property type="match status" value="1"/>
</dbReference>
<dbReference type="InterPro" id="IPR001441">
    <property type="entry name" value="UPP_synth-like"/>
</dbReference>
<dbReference type="InterPro" id="IPR018520">
    <property type="entry name" value="UPP_synth-like_CS"/>
</dbReference>
<dbReference type="InterPro" id="IPR036424">
    <property type="entry name" value="UPP_synth-like_sf"/>
</dbReference>
<dbReference type="NCBIfam" id="TIGR00055">
    <property type="entry name" value="uppS"/>
    <property type="match status" value="1"/>
</dbReference>
<dbReference type="PANTHER" id="PTHR10291:SF43">
    <property type="entry name" value="DEHYDRODOLICHYL DIPHOSPHATE SYNTHASE COMPLEX SUBUNIT DHDDS"/>
    <property type="match status" value="1"/>
</dbReference>
<dbReference type="PANTHER" id="PTHR10291">
    <property type="entry name" value="DEHYDRODOLICHYL DIPHOSPHATE SYNTHASE FAMILY MEMBER"/>
    <property type="match status" value="1"/>
</dbReference>
<dbReference type="Pfam" id="PF01255">
    <property type="entry name" value="Prenyltransf"/>
    <property type="match status" value="1"/>
</dbReference>
<dbReference type="SUPFAM" id="SSF64005">
    <property type="entry name" value="Undecaprenyl diphosphate synthase"/>
    <property type="match status" value="1"/>
</dbReference>
<dbReference type="PROSITE" id="PS01066">
    <property type="entry name" value="UPP_SYNTHASE"/>
    <property type="match status" value="1"/>
</dbReference>
<name>HRT2_HEVBR</name>
<keyword id="KW-0808">Transferase</keyword>
<proteinExistence type="evidence at protein level"/>
<feature type="chain" id="PRO_0000418868" description="Rubber cis-polyprenyltransferase HRT2">
    <location>
        <begin position="1"/>
        <end position="284"/>
    </location>
</feature>
<feature type="active site" evidence="1">
    <location>
        <position position="41"/>
    </location>
</feature>
<reference key="1">
    <citation type="journal article" date="2003" name="Eur. J. Biochem.">
        <title>Molecular cloning, expression and characterization of cDNA encoding cis-prenyltransferases from Hevea brasiliensis. A key factor participating in natural rubber biosynthesis.</title>
        <authorList>
            <person name="Asawatreratanakul K."/>
            <person name="Zhang Y.W."/>
            <person name="Wititsuwannakul D."/>
            <person name="Wititsuwannakul R."/>
            <person name="Takahashi S."/>
            <person name="Rattanapittayaporn A."/>
            <person name="Koyama T."/>
        </authorList>
    </citation>
    <scope>NUCLEOTIDE SEQUENCE [MRNA]</scope>
    <scope>FUNCTION</scope>
    <scope>CATALYTIC ACTIVITY</scope>
    <scope>TISSUE SPECIFICITY</scope>
</reference>
<sequence length="284" mass="32683">MELYNGERPSVFRLLGKYMRKGLYSILTQGPIPTHIAFILDGNGRFAKKHKLPEGGGHKAGFLALLNVLTYCYELGVKYATIYAFSIDNFRRKPHEVQYVMNLMLEKIEGMIMEESIINAYDICVRFVGNLKLLDEPLKTAADKIMRATAKNSKFVLLLAVCYTSTDEIVHAVEESSKDKLKSDEICNDGNGDCVIKIEEMEPYSEIKLVELERNTYINPYPDVLIRTSGETRLSNYLLWQTTNCILYSPHALWPEIGLRHVVWAVINCQRHYSYLEKHKEYLK</sequence>
<evidence type="ECO:0000250" key="1"/>
<evidence type="ECO:0000269" key="2">
    <source>
    </source>
</evidence>
<evidence type="ECO:0000305" key="3"/>
<accession>Q8W3U4</accession>
<comment type="function">
    <text evidence="2">Proposed to be involved in rubber biosynthesis as a particle-bound rubber transferase responsible for the cis-1,4-polymerization of isoprene subunits. Probably requires additional factors for the production of high molecular mass rubber.</text>
</comment>
<comment type="catalytic activity">
    <reaction evidence="2">
        <text>(cis-prenyl)(n)-diphosphate + isopentenyl diphosphate = (cis-prenyl)(n+1)-diphosphate + diphosphate</text>
        <dbReference type="Rhea" id="RHEA:18801"/>
        <dbReference type="Rhea" id="RHEA-COMP:10564"/>
        <dbReference type="Rhea" id="RHEA-COMP:14484"/>
        <dbReference type="ChEBI" id="CHEBI:33019"/>
        <dbReference type="ChEBI" id="CHEBI:83374"/>
        <dbReference type="ChEBI" id="CHEBI:128769"/>
        <dbReference type="EC" id="2.5.1.20"/>
    </reaction>
</comment>
<comment type="tissue specificity">
    <text evidence="2">Predominantly expressed in latex.</text>
</comment>
<comment type="similarity">
    <text evidence="3">Belongs to the UPP synthase family.</text>
</comment>